<accession>A2QYX4</accession>
<keyword id="KW-0436">Ligase</keyword>
<keyword id="KW-0596">Phosphopantetheine</keyword>
<keyword id="KW-0597">Phosphoprotein</keyword>
<keyword id="KW-1185">Reference proteome</keyword>
<keyword id="KW-0677">Repeat</keyword>
<organism>
    <name type="scientific">Aspergillus niger (strain ATCC MYA-4892 / CBS 513.88 / FGSC A1513)</name>
    <dbReference type="NCBI Taxonomy" id="425011"/>
    <lineage>
        <taxon>Eukaryota</taxon>
        <taxon>Fungi</taxon>
        <taxon>Dikarya</taxon>
        <taxon>Ascomycota</taxon>
        <taxon>Pezizomycotina</taxon>
        <taxon>Eurotiomycetes</taxon>
        <taxon>Eurotiomycetidae</taxon>
        <taxon>Eurotiales</taxon>
        <taxon>Aspergillaceae</taxon>
        <taxon>Aspergillus</taxon>
        <taxon>Aspergillus subgen. Circumdati</taxon>
    </lineage>
</organism>
<proteinExistence type="evidence at protein level"/>
<protein>
    <recommendedName>
        <fullName evidence="9">Malformin synthetase mlfA</fullName>
        <ecNumber evidence="8">6.3.2.-</ecNumber>
    </recommendedName>
    <alternativeName>
        <fullName evidence="9">Malformin biosynthesis cluster protein A</fullName>
    </alternativeName>
    <alternativeName>
        <fullName evidence="9">Nonribosomal peptide synthetase mlfA</fullName>
    </alternativeName>
</protein>
<gene>
    <name evidence="9" type="primary">mlfA</name>
    <name type="ORF">An12g02840</name>
</gene>
<dbReference type="EC" id="6.3.2.-" evidence="8"/>
<dbReference type="EMBL" id="AM270265">
    <property type="protein sequence ID" value="CAK41123.1"/>
    <property type="molecule type" value="Genomic_DNA"/>
</dbReference>
<dbReference type="SMR" id="A2QYX4"/>
<dbReference type="EnsemblFungi" id="CAK41123">
    <property type="protein sequence ID" value="CAK41123"/>
    <property type="gene ID" value="An12g02840"/>
</dbReference>
<dbReference type="VEuPathDB" id="FungiDB:An12g02840"/>
<dbReference type="HOGENOM" id="CLU_000022_60_0_1"/>
<dbReference type="Proteomes" id="UP000006706">
    <property type="component" value="Chromosome 3L"/>
</dbReference>
<dbReference type="GO" id="GO:0005737">
    <property type="term" value="C:cytoplasm"/>
    <property type="evidence" value="ECO:0007669"/>
    <property type="project" value="TreeGrafter"/>
</dbReference>
<dbReference type="GO" id="GO:0016874">
    <property type="term" value="F:ligase activity"/>
    <property type="evidence" value="ECO:0007669"/>
    <property type="project" value="UniProtKB-KW"/>
</dbReference>
<dbReference type="GO" id="GO:0031177">
    <property type="term" value="F:phosphopantetheine binding"/>
    <property type="evidence" value="ECO:0007669"/>
    <property type="project" value="InterPro"/>
</dbReference>
<dbReference type="GO" id="GO:0043041">
    <property type="term" value="P:amino acid activation for nonribosomal peptide biosynthetic process"/>
    <property type="evidence" value="ECO:0007669"/>
    <property type="project" value="TreeGrafter"/>
</dbReference>
<dbReference type="GO" id="GO:0019748">
    <property type="term" value="P:secondary metabolic process"/>
    <property type="evidence" value="ECO:0000303"/>
    <property type="project" value="AspGD"/>
</dbReference>
<dbReference type="GO" id="GO:0044550">
    <property type="term" value="P:secondary metabolite biosynthetic process"/>
    <property type="evidence" value="ECO:0007669"/>
    <property type="project" value="TreeGrafter"/>
</dbReference>
<dbReference type="CDD" id="cd05918">
    <property type="entry name" value="A_NRPS_SidN3_like"/>
    <property type="match status" value="4"/>
</dbReference>
<dbReference type="CDD" id="cd19542">
    <property type="entry name" value="CT_NRPS-like"/>
    <property type="match status" value="2"/>
</dbReference>
<dbReference type="CDD" id="cd19534">
    <property type="entry name" value="E_NRPS"/>
    <property type="match status" value="1"/>
</dbReference>
<dbReference type="CDD" id="cd19545">
    <property type="entry name" value="FUM14_C_NRPS-like"/>
    <property type="match status" value="1"/>
</dbReference>
<dbReference type="FunFam" id="3.30.559.10:FF:000016">
    <property type="entry name" value="Nonribosomal peptide synthase Pes1"/>
    <property type="match status" value="1"/>
</dbReference>
<dbReference type="FunFam" id="3.30.559.30:FF:000002">
    <property type="entry name" value="Nonribosomal peptide synthase Pes1"/>
    <property type="match status" value="1"/>
</dbReference>
<dbReference type="FunFam" id="3.30.300.30:FF:000015">
    <property type="entry name" value="Nonribosomal peptide synthase SidD"/>
    <property type="match status" value="4"/>
</dbReference>
<dbReference type="FunFam" id="3.30.559.30:FF:000003">
    <property type="entry name" value="Nonribosomal peptide synthase SidD"/>
    <property type="match status" value="1"/>
</dbReference>
<dbReference type="FunFam" id="1.10.1200.10:FF:000005">
    <property type="entry name" value="Nonribosomal peptide synthetase 1"/>
    <property type="match status" value="1"/>
</dbReference>
<dbReference type="Gene3D" id="3.30.300.30">
    <property type="match status" value="4"/>
</dbReference>
<dbReference type="Gene3D" id="1.10.1200.10">
    <property type="entry name" value="ACP-like"/>
    <property type="match status" value="4"/>
</dbReference>
<dbReference type="Gene3D" id="3.30.559.10">
    <property type="entry name" value="Chloramphenicol acetyltransferase-like domain"/>
    <property type="match status" value="5"/>
</dbReference>
<dbReference type="Gene3D" id="3.40.50.12780">
    <property type="entry name" value="N-terminal domain of ligase-like"/>
    <property type="match status" value="4"/>
</dbReference>
<dbReference type="Gene3D" id="3.30.559.30">
    <property type="entry name" value="Nonribosomal peptide synthetase, condensation domain"/>
    <property type="match status" value="5"/>
</dbReference>
<dbReference type="InterPro" id="IPR010071">
    <property type="entry name" value="AA_adenyl_dom"/>
</dbReference>
<dbReference type="InterPro" id="IPR036736">
    <property type="entry name" value="ACP-like_sf"/>
</dbReference>
<dbReference type="InterPro" id="IPR045851">
    <property type="entry name" value="AMP-bd_C_sf"/>
</dbReference>
<dbReference type="InterPro" id="IPR020845">
    <property type="entry name" value="AMP-binding_CS"/>
</dbReference>
<dbReference type="InterPro" id="IPR000873">
    <property type="entry name" value="AMP-dep_synth/lig_dom"/>
</dbReference>
<dbReference type="InterPro" id="IPR042099">
    <property type="entry name" value="ANL_N_sf"/>
</dbReference>
<dbReference type="InterPro" id="IPR023213">
    <property type="entry name" value="CAT-like_dom_sf"/>
</dbReference>
<dbReference type="InterPro" id="IPR001242">
    <property type="entry name" value="Condensatn"/>
</dbReference>
<dbReference type="InterPro" id="IPR020806">
    <property type="entry name" value="PKS_PP-bd"/>
</dbReference>
<dbReference type="InterPro" id="IPR009081">
    <property type="entry name" value="PP-bd_ACP"/>
</dbReference>
<dbReference type="InterPro" id="IPR006162">
    <property type="entry name" value="Ppantetheine_attach_site"/>
</dbReference>
<dbReference type="NCBIfam" id="TIGR01733">
    <property type="entry name" value="AA-adenyl-dom"/>
    <property type="match status" value="4"/>
</dbReference>
<dbReference type="NCBIfam" id="NF003417">
    <property type="entry name" value="PRK04813.1"/>
    <property type="match status" value="4"/>
</dbReference>
<dbReference type="PANTHER" id="PTHR45527">
    <property type="entry name" value="NONRIBOSOMAL PEPTIDE SYNTHETASE"/>
    <property type="match status" value="1"/>
</dbReference>
<dbReference type="PANTHER" id="PTHR45527:SF15">
    <property type="entry name" value="NONRIBOSOMAL PEPTIDE SYNTHETASE EASA-RELATED"/>
    <property type="match status" value="1"/>
</dbReference>
<dbReference type="Pfam" id="PF00501">
    <property type="entry name" value="AMP-binding"/>
    <property type="match status" value="4"/>
</dbReference>
<dbReference type="Pfam" id="PF00668">
    <property type="entry name" value="Condensation"/>
    <property type="match status" value="5"/>
</dbReference>
<dbReference type="Pfam" id="PF00550">
    <property type="entry name" value="PP-binding"/>
    <property type="match status" value="4"/>
</dbReference>
<dbReference type="SMART" id="SM00823">
    <property type="entry name" value="PKS_PP"/>
    <property type="match status" value="3"/>
</dbReference>
<dbReference type="SMART" id="SM01294">
    <property type="entry name" value="PKS_PP_betabranch"/>
    <property type="match status" value="1"/>
</dbReference>
<dbReference type="SUPFAM" id="SSF56801">
    <property type="entry name" value="Acetyl-CoA synthetase-like"/>
    <property type="match status" value="4"/>
</dbReference>
<dbReference type="SUPFAM" id="SSF47336">
    <property type="entry name" value="ACP-like"/>
    <property type="match status" value="4"/>
</dbReference>
<dbReference type="SUPFAM" id="SSF52777">
    <property type="entry name" value="CoA-dependent acyltransferases"/>
    <property type="match status" value="10"/>
</dbReference>
<dbReference type="PROSITE" id="PS00455">
    <property type="entry name" value="AMP_BINDING"/>
    <property type="match status" value="3"/>
</dbReference>
<dbReference type="PROSITE" id="PS50075">
    <property type="entry name" value="CARRIER"/>
    <property type="match status" value="4"/>
</dbReference>
<dbReference type="PROSITE" id="PS00012">
    <property type="entry name" value="PHOSPHOPANTETHEINE"/>
    <property type="match status" value="1"/>
</dbReference>
<reference key="1">
    <citation type="journal article" date="2007" name="Nat. Biotechnol.">
        <title>Genome sequencing and analysis of the versatile cell factory Aspergillus niger CBS 513.88.</title>
        <authorList>
            <person name="Pel H.J."/>
            <person name="de Winde J.H."/>
            <person name="Archer D.B."/>
            <person name="Dyer P.S."/>
            <person name="Hofmann G."/>
            <person name="Schaap P.J."/>
            <person name="Turner G."/>
            <person name="de Vries R.P."/>
            <person name="Albang R."/>
            <person name="Albermann K."/>
            <person name="Andersen M.R."/>
            <person name="Bendtsen J.D."/>
            <person name="Benen J.A.E."/>
            <person name="van den Berg M."/>
            <person name="Breestraat S."/>
            <person name="Caddick M.X."/>
            <person name="Contreras R."/>
            <person name="Cornell M."/>
            <person name="Coutinho P.M."/>
            <person name="Danchin E.G.J."/>
            <person name="Debets A.J.M."/>
            <person name="Dekker P."/>
            <person name="van Dijck P.W.M."/>
            <person name="van Dijk A."/>
            <person name="Dijkhuizen L."/>
            <person name="Driessen A.J.M."/>
            <person name="d'Enfert C."/>
            <person name="Geysens S."/>
            <person name="Goosen C."/>
            <person name="Groot G.S.P."/>
            <person name="de Groot P.W.J."/>
            <person name="Guillemette T."/>
            <person name="Henrissat B."/>
            <person name="Herweijer M."/>
            <person name="van den Hombergh J.P.T.W."/>
            <person name="van den Hondel C.A.M.J.J."/>
            <person name="van der Heijden R.T.J.M."/>
            <person name="van der Kaaij R.M."/>
            <person name="Klis F.M."/>
            <person name="Kools H.J."/>
            <person name="Kubicek C.P."/>
            <person name="van Kuyk P.A."/>
            <person name="Lauber J."/>
            <person name="Lu X."/>
            <person name="van der Maarel M.J.E.C."/>
            <person name="Meulenberg R."/>
            <person name="Menke H."/>
            <person name="Mortimer M.A."/>
            <person name="Nielsen J."/>
            <person name="Oliver S.G."/>
            <person name="Olsthoorn M."/>
            <person name="Pal K."/>
            <person name="van Peij N.N.M.E."/>
            <person name="Ram A.F.J."/>
            <person name="Rinas U."/>
            <person name="Roubos J.A."/>
            <person name="Sagt C.M.J."/>
            <person name="Schmoll M."/>
            <person name="Sun J."/>
            <person name="Ussery D."/>
            <person name="Varga J."/>
            <person name="Vervecken W."/>
            <person name="van de Vondervoort P.J.J."/>
            <person name="Wedler H."/>
            <person name="Woesten H.A.B."/>
            <person name="Zeng A.-P."/>
            <person name="van Ooyen A.J.J."/>
            <person name="Visser J."/>
            <person name="Stam H."/>
        </authorList>
    </citation>
    <scope>NUCLEOTIDE SEQUENCE [LARGE SCALE GENOMIC DNA]</scope>
    <source>
        <strain>ATCC MYA-4892 / CBS 513.88 / FGSC A1513</strain>
    </source>
</reference>
<reference key="2">
    <citation type="journal article" date="2009" name="J. Antibiot.">
        <title>Solid-phase synthesis and biological activity of malformin C and its derivatives.</title>
        <authorList>
            <person name="Kojima Y."/>
            <person name="Sunazuka T."/>
            <person name="Nagai K."/>
            <person name="Hirose T."/>
            <person name="Namatame M."/>
            <person name="Ishiyama A."/>
            <person name="Otoguro K."/>
            <person name="Omura S."/>
        </authorList>
    </citation>
    <scope>BIOTECHNOLOGY</scope>
</reference>
<reference key="3">
    <citation type="journal article" date="2015" name="PLoS ONE">
        <title>Study of malformin C, a fungal source cyclic pentapeptide, as an anti-cancer drug.</title>
        <authorList>
            <person name="Wang J."/>
            <person name="Jiang Z."/>
            <person name="Lam W."/>
            <person name="Gullen E.A."/>
            <person name="Yu Z."/>
            <person name="Wei Y."/>
            <person name="Wang L."/>
            <person name="Zeiss C."/>
            <person name="Beck A."/>
            <person name="Cheng E.C."/>
            <person name="Wu C."/>
            <person name="Cheng Y.C."/>
            <person name="Zhang Y."/>
        </authorList>
    </citation>
    <scope>BIOTECHNOLOGY</scope>
</reference>
<reference key="4">
    <citation type="journal article" date="2016" name="Cancer Chemother. Pharmacol.">
        <title>Malformin A1 promotes cell death through induction of apoptosis, necrosis and autophagy in prostate cancer cells.</title>
        <authorList>
            <person name="Liu Y."/>
            <person name="Wang M."/>
            <person name="Wang D."/>
            <person name="Li X."/>
            <person name="Wang W."/>
            <person name="Lou H."/>
            <person name="Yuan H."/>
        </authorList>
    </citation>
    <scope>BIOTECHNOLOGY</scope>
</reference>
<reference key="5">
    <citation type="journal article" date="2017" name="Int. J. Oncol.">
        <title>Malformin A1 treatment alters invasive and oncogenic phenotypes of human colorectal cancer cells through stimulation of the p38 signaling pathway.</title>
        <authorList>
            <person name="Park S.Y."/>
            <person name="Oh H.H."/>
            <person name="Park Y.L."/>
            <person name="Yu H.M."/>
            <person name="Myung D.S."/>
            <person name="Cho S.B."/>
            <person name="Lee W.S."/>
            <person name="Park D."/>
            <person name="Joo Y.E."/>
        </authorList>
    </citation>
    <scope>BIOTECHNOLOGY</scope>
</reference>
<reference key="6">
    <citation type="journal article" date="2018" name="Sci. Rep.">
        <title>Uncovering secondary metabolite evolution and biosynthesis using gene cluster networks and genetic dereplication.</title>
        <authorList>
            <person name="Theobald S."/>
            <person name="Vesth T.C."/>
            <person name="Rendsvig J.K."/>
            <person name="Nielsen K.F."/>
            <person name="Riley R."/>
            <person name="de Abreu L.M."/>
            <person name="Salamov A."/>
            <person name="Frisvad J.C."/>
            <person name="Larsen T.O."/>
            <person name="Andersen M.R."/>
            <person name="Hoof J.B."/>
        </authorList>
    </citation>
    <scope>IDENTIFICATION</scope>
    <scope>FUNCTION</scope>
    <scope>PATHWAY</scope>
</reference>
<name>MLFA_ASPNC</name>
<comment type="function">
    <text evidence="8 11">Nonribosomal peptide synthetase; part of the gene cluster that mediates the biosynthesis of malformins, cyclic pentapeptides with a disulfide bond between 2 consecutive cysteins, that show potential anti-tumor as well as antimalarial and antitrypanosomal properties (PubMed:30560908). The nonribosomal peptide synthetase mlfA is responsible of the formation of the cyclic pentapeptide (Probable). The malformin biosynthesis clusters in malformin-producing fungi also contain enzymes involved in the formation of the disulfide bond between the two consecutive cysteins within malformins, in addition to additional tailoring enzymes such as methyltransferases or oxidoreductases. They are also composed of up to 4 major facilitator superfamily transporters, and transcription factors probably involved in the regulation of the expression of those clusters (Probable).</text>
</comment>
<comment type="pathway">
    <text evidence="11">Secondary metabolite biosynthesis.</text>
</comment>
<comment type="domain">
    <text evidence="11">NRP synthetases are composed of discrete domains (adenylation (A), thiolation (T) or peptidyl carrier protein (PCP) and condensation (C) domains) which when grouped together are referred to as a single module. Each module is responsible for the recognition (via the A domain) and incorporation of a single amino acid into the growing peptide product. Thus, an NRP synthetase is generally composed of one or more modules and can terminate in a thioesterase domain (TE) that releases the newly synthesized peptide from the enzyme. Occasionally, epimerase (E) domains (responsible for L- to D- amino acid conversion) are present within the NRP synthetase. MlfA has the following architecture: A-T-C-A-T-C-A-T-C-C-A-T-C, with the functions of the five condensation domains during malformin biosynthesis being DL-joining (epimerizing subtype), LL-joining, epimerization, DL-joining and cyclizing domain, respectively.</text>
</comment>
<comment type="biotechnology">
    <text evidence="4 5 6 7">Malformins show anti-tumor properties against human colorectal and prostate cancer cells by the inhibition of proliferation and induction of apoptosis through the activation of the p38 signaling pathway (PubMed:26540166, PubMed:26645406, PubMed:28713983). Malformin C has also been shown to exhibit potent antimalarial and antitrypanosomal properties (PubMed:19876076).</text>
</comment>
<comment type="similarity">
    <text evidence="10">Belongs to the NRP synthetase family.</text>
</comment>
<sequence length="5054" mass="555691">MSRFSCIFPTLTDGYVPNLDQTRAAGRRTYTIDRRGWTAPSSQTESHILAAWGLVLSSYVGTDEVAFYIVPTTGPDTTALAELKVEGDMSRRSLINAAEQLLHPGPVGAGQVSGESANTIITFEKDIESLFVTQAEAANVGTAMAQALAEVGADDHNRLIKNLNLMSPTHLESIWQFNANVPGMWEECFHDVIERRAANRPHSLAVDAWDMKLTYADLVREARLLAAYLQHRGVRPGSVVPISFERSGAALVAMLAVSKAGGAFVSVPPTLPAGRLDAILEVIEAPFVVTWSKYEPFWAERLPTLPIDSYPKPSADATVKTLGKPEDLFYVIFTSGSTGRPKGCMLSHSNWLNGALRNAPSWKYGPESRVLQMLSHTFDMSLLEICTSLGSGACVCVPRTEEIETSVSDAINRWQVNHVIMTPSLARSLRRDDVPGLKTMCLGGEAFPREIVTMWSERINLWQFYGPSECSINSSSRPITRPDADPLNIGPPNSAACWVVDTQDYNKLVPVGAIGELLVSGPIVGMGYLKNPIKTAEAFLDEVGFVAKDDPQFGGFRFYRTGDLVRWNSDGTITFCGRADTQVKLNGQRLELAEVEYQLGLEAGVQYAIAMAPQSGRCKNNLIAVLTVKCGGASNQGNADDEIPLLDRHDPIVQQTVKKLRSQLQHALPRYMVPTIWAFVGRMPMSPSGKIDRVQLRNWVQEMSQETFDAITGRSFEAEDHVLGLSQLEQEIQLAWAEALGLSAAEVGLQQPFVALGGDSIKALDAVARCRARQIKISMVHILSCEGVREASSLAEVQETPAHQVAEIAVDYSDLWTRLSTEYDISKLGVTQVEEVEDVFPCTTMQEGMFLGQIRRPGAYHMRFFHRVQLKGGSLPTVERIQQAWASLVERHPSLRTVFVDDLSSEAIYHSVVLRSVPMELTMREVPRDLNPESALAMFTEELVPFRPNAPLHRMLLLTCRGRVPYLMLEISHVIMDGYALSVFRREFIRACSSTASLPRGPDYRMFANYHRTRQTDESAKYWTNYLADCVPCHIPTDPLSVPTDASPEWPRTLQRRDFGFDNSVAFLQRCKERQVTLACAIRAAWALVLRAYTQSRDVCFGYVSSGRNVPVPEVETIFGLCLSMQVCRAKLSEASTIASLARKIQEDYVASLPFQHYPLAEAQRGLKQTHGQGLFNTAISMEWVPPTAEDEDALLDLEEIREQDDPTEYDIAISVDIHEGHIKLGFLYWPNLSDFQITHLAEALQGAMNCFAFQPDVALNTLTLLQASDLCSTLTNGPTLLPLEAVRGNVISMIDRWVTRQPESPAIDGWDGSLTYKQLHEQSSWVARNLLHQGVKLGDRILVCADRSSRTVVTILGVVRAGCVLVLSNPTDPEKRLQWLAHKCNATLVVADPAYEERFATSGARVFSTTSVCAPAAWDYEFSALDDQDLVSILFTSGSTGTPKGILMDHGALATSVLLGHGRTLRFSRHTRMLHFASLTFDAALAEIFTTLAHGGCICVPCEEDRLSDVSGCISRFAVNTAMLTPSVGRLLDPEALPTLKALAMIGEPMSRLDVERFAPVLDLYNGAGPTETSIMVTIAGPMKPTDEPVNLGYAVAGVRLWVTEAENPNRLAPLGAVGELIVEGRLVTRGYLDDPARTRESFLPNLPWLPSQHALYRTGDLVRYAEDGSLRYMGRKDTQVKLRGQRIELQEVEYHLRKSLQQAQVVVEMVIPEGKIRAQASLVAFVSGLTAADVESSSARNFDQSMPMSQIALPGSTIQALEEALPRYMIPSVYFALDTIPLSVNGKADRRRLREIGAALLVSSTAHKNTVDGKSEPVKWTASSKLELTLLELWTTTLGLEAETIYGDDSFFELGGDSVSAMKLVATARDRFKLSLSVPQMFRHPTIHQLAAILGEATGQPESSASSTTEEGFTFSTPDDSSTNDGVDDDFLRLATAQLAQLAQEKGKKVDIAALLKQLQGGSSSCKTPSVSSSSSSSSSRKKKSAKVVSPVEAPAPVPVPFSLLDGGADVVEKIRAQAVEQCKILPGDIEDIYPATALQEGMMALMARTPGVYTTTLTCELPERVNLARLHSAWDKAAEAHPILRTRIILTENNTAVQVVQRAKELPWDAYSLQDGDPLPDLTSNMTLGSTLLRLAEIHRQNQPRMLLVAIHHALYDGWSMPLLKQAVEDVYHGQELWPQPFTPFINYLNEGKPAAQGYWTAHLDGFAGSVFPNLPSINHHIQPTERRTRSLAVPTAPPGSQYTMATKIQAAWAVTVSRYAEAEDIVFGTVSTGRSAPVPSIDRMVGPTITTVPVRISLGNQAERLTSLLQRVQEDGWNRMDHEHLGLQHIRRLGESAAAACNLQTLLVIQPREEPRAKSISTLLSGLQDVAELKGVDTYPLMLVCEPDGVSLHLTAVFDPAVLDAVMLDRMLAHWELVLNQIWSEPDMAVMGLDGVSYRDKQTLVRWNAGEKIADGCAHDAVYEWSVRTPHAPAVFAWDGKWTYEELEKCSSLIASQVLVHGVSSGDFVALYHEKSRWAAAAILAVFKAGGILVTLDPAHPKDRIKDILDQARPRLVLTSQSLLDEARELETPVMVVQFAASQPMPGECFPLPTVSPTQAAYAPFTSGSTGRPKGIPLEHRGLAASTASVARACLLRPASRVLHFASFAFDASMMEHLIAWHAGSCLCIPVETVRQTDLARCIRDFEVTWAFLTPSCLRLISPDDVQSLEALGLGGESMTPEDIFIWGPRLRQIVQLYGPAECSIVAALTEVTKPSENRLIGRPNACRCWVVDPHSPDRLAPLGAVGELVIEGITVGRGYIDDPERTTQAFIPPPTWIQTLYPNEQQPSRLYRTGDLVRYAGTDGKLTFIGRRDGQLKLHGQRIELADVEAHLRPLIPGTQKVVVEMVHSVGNHHPLLAAFVEEILTSQDQVEQVVNLLHPSQTQCALNVKAIDSALSQTVPQYMIPSMYLHISRLPLSASGKLNRRHLRRLVAEFPRQRLSEYAAGSGLAVPNRPATAQEREMQAIWARVLSVDPDTIGVNEDFFRIGGDSISGMQVATRCNAAGMHITSADLFQHRTIEQLMRHLSANGKTGSASISLPPEPVDEWVPLAPIQQLFFEIAPQGPDHFNQSLLLRTSRRVSAEKLAGGLDILVGRHSMLRARFCRDDSGQWSQQVRSRGPYPASAFYRLTTHNHIAPELLSSLLAASQMALSIQEGPLLAVDLVNLTDDTQLVYLVAHHLIIDLVSWRILHAELEEYLQTGSFASTTGSVPFLTWSRAQAEYSANHLTPTLPLPGFQEANDGFDASRYWGISCESNTFGQTSTSTFTLDQTVTDQLFGPANNVLDTRPAEILQAALWYSFTQSLTDRPGPSIYVEGHGREPWTGSIDLSGTVGWFTTMSPLVSAPWDSLSQTSMRDFLDALSYIKDQRRRIPANGWAYFTSRYLNDEGKVAYGRMKPVVEILFNYMGQYQEMNREDAILQLAGDGIQSGTGAADVADNVPRFSLIDVSAFISNGCLTFQFILPKSLQQDSRLQGCFQEYERTLVAAANSLSTEGPRKTLADFPLMPALTYDQLSQCLDHTLPSMGLCARDVVDIYPCSPVQQGMLLAQLRDRQAYQQRFRFQVKSRGSTDRLTLEKLKDAWTEVINRHDILRTLLLPVSDYSHLDQVVMAPGSLQHLVRINAMDTNPTQGLPHSINITSDSTGTVICEWNVSHALVDAMSIAVIQQEVNEALEGSLGQHQKTPRYADYIQWLSLQDNTETQAYWKKYLEGVEPCLFPKLASSTDKVNPEGTISAIRATWTRDSRLDKLCHTHGITLTNLFHIVWSLLLSAYLGTDKVCFGYTTLGRDVPVDGVEKMVGPLVNVIATTIQLQEDDSILDALLTHQTHLSNSLQHQHYALADVYASLGLVGSQLFNTIVSLQDISHFDANDERPTRVEMLPANDVSEYDVALNIGVDQSSIQVVCSYRTLSLSVEQADALLRTTSHVLDEILRDPKQPLRDLEVISPQCKEQLVKWNAAMPAPTDEYIHEKIQDQCRLHSSREAACAWDGIFTFAEVDDLSSRLAARLIRMGVTSGHIIPIYSPKSRWTVIAILGVLKTGAAFTLLETSHPTARLRVICNEIKADIIIAPASHAVPAATLAPILVVLDSITSMSPQESDLLPAVGMPPAAEALAYLIFTSGSTGNPKGVMVTHQNLCSNASIMTTSVNMTSDSRVLHFASHAFDACLWEIFGALFAGACLIIPSESETKEDLAGCIERMVVTWAFLTPSVARILKPEALPSLRNLVLGGEPIAASDLDMWRGHVQVVCAYGPTETAILASTTSPSTFPSDGKDIGVPTGSSLWIVDKQNYNKLAPHGATGELLIEGPNVSQGYLGDPEKTNEAFPVAPRWLSQLRKSPTRVYRTGDLVRFNTSTGTIHFVGRKDNQIKFHGQRIELGDIEHHAQQAFSNASMVIVDLITPEQPQQPYIVAFVHQADTRTGTADPIDTILLPPSESFRADAIGAQNHMHKRLPHYMVPTAFLPLHRLPLSGTGKADRKRLRQCALSLSSLELNAYRATASAKRMPFTAAECKMQELVATVLGRDMSEIGMDDSFFYLGGDSIQAMRLVSEGRQQGLTLSLQAIFDAPRLGDLAYRTANLVRVSEPAPPTLPATSSDDCDHKETIVAALPIKKTDVAEVLPTTSFQRTWLDSQLKSYIVVDIPGPIDLARLRTAIQRVVKAHPILRASFVPYETTTMQVILRTAVVITKADLSTTTVEGICRKDANAPMAPGTPYLRVILATQGEVDRKLIMRLSHAQYDGISLSLLMNDLSHAYASESRPLPSSHLPAFNDYITYQQTQGADPTATTFWHRLLKDVPITYLDLQPAETPTSNGSLITRTRDINIAAFPSLPNGITTATAVKAAWSLVLAQKTGSLAVIFGQVVHGRGIALTGVEGIVGPCANITPVVARLGPQTTRMELMQTLQDQHRSAMPYETAGRKELQTIVQHQNNVMADDMELSLGEARCRVDLRAVDHVPQEVWVYSSIDGGRPGMLEVKIMSSTLVLSEEVAEELMDLLVEMMKRLFSDPEGVCV</sequence>
<evidence type="ECO:0000255" key="1"/>
<evidence type="ECO:0000255" key="2">
    <source>
        <dbReference type="PROSITE-ProRule" id="PRU00258"/>
    </source>
</evidence>
<evidence type="ECO:0000256" key="3">
    <source>
        <dbReference type="SAM" id="MobiDB-lite"/>
    </source>
</evidence>
<evidence type="ECO:0000269" key="4">
    <source>
    </source>
</evidence>
<evidence type="ECO:0000269" key="5">
    <source>
    </source>
</evidence>
<evidence type="ECO:0000269" key="6">
    <source>
    </source>
</evidence>
<evidence type="ECO:0000269" key="7">
    <source>
    </source>
</evidence>
<evidence type="ECO:0000269" key="8">
    <source>
    </source>
</evidence>
<evidence type="ECO:0000303" key="9">
    <source>
    </source>
</evidence>
<evidence type="ECO:0000305" key="10"/>
<evidence type="ECO:0000305" key="11">
    <source>
    </source>
</evidence>
<feature type="chain" id="PRO_0000446437" description="Malformin synthetase mlfA">
    <location>
        <begin position="1"/>
        <end position="5054"/>
    </location>
</feature>
<feature type="domain" description="Carrier 1" evidence="2">
    <location>
        <begin position="723"/>
        <end position="799"/>
    </location>
</feature>
<feature type="domain" description="Carrier 2" evidence="2">
    <location>
        <begin position="1823"/>
        <end position="1900"/>
    </location>
</feature>
<feature type="domain" description="Carrier 3" evidence="2">
    <location>
        <begin position="2999"/>
        <end position="3075"/>
    </location>
</feature>
<feature type="domain" description="Carrier 4" evidence="2">
    <location>
        <begin position="4546"/>
        <end position="4622"/>
    </location>
</feature>
<feature type="region of interest" description="Adenylation 1" evidence="1">
    <location>
        <begin position="194"/>
        <end position="585"/>
    </location>
</feature>
<feature type="region of interest" description="Condensation 1" evidence="1">
    <location>
        <begin position="837"/>
        <end position="1268"/>
    </location>
</feature>
<feature type="region of interest" description="Adenylation 2" evidence="1">
    <location>
        <begin position="1296"/>
        <end position="1685"/>
    </location>
</feature>
<feature type="region of interest" description="Disordered" evidence="3">
    <location>
        <begin position="1899"/>
        <end position="1929"/>
    </location>
</feature>
<feature type="region of interest" description="Disordered" evidence="3">
    <location>
        <begin position="1964"/>
        <end position="1994"/>
    </location>
</feature>
<feature type="region of interest" description="Condensation 2" evidence="1">
    <location>
        <begin position="2033"/>
        <end position="2448"/>
    </location>
</feature>
<feature type="region of interest" description="Adenylation 3" evidence="1">
    <location>
        <begin position="2471"/>
        <end position="2863"/>
    </location>
</feature>
<feature type="region of interest" description="Condensation 3" evidence="1">
    <location>
        <begin position="3092"/>
        <end position="3557"/>
    </location>
</feature>
<feature type="region of interest" description="Condensation 4" evidence="1">
    <location>
        <begin position="3578"/>
        <end position="3997"/>
    </location>
</feature>
<feature type="region of interest" description="Adenylation 4" evidence="1">
    <location>
        <begin position="4022"/>
        <end position="4412"/>
    </location>
</feature>
<feature type="region of interest" description="Condensation 5" evidence="1">
    <location>
        <begin position="4659"/>
        <end position="4972"/>
    </location>
</feature>
<feature type="compositionally biased region" description="Low complexity" evidence="3">
    <location>
        <begin position="1904"/>
        <end position="1927"/>
    </location>
</feature>
<feature type="compositionally biased region" description="Low complexity" evidence="3">
    <location>
        <begin position="1965"/>
        <end position="1981"/>
    </location>
</feature>
<feature type="modified residue" description="O-(pantetheine 4'-phosphoryl)serine" evidence="2">
    <location>
        <position position="760"/>
    </location>
</feature>
<feature type="modified residue" description="O-(pantetheine 4'-phosphoryl)serine" evidence="2">
    <location>
        <position position="1860"/>
    </location>
</feature>
<feature type="modified residue" description="O-(pantetheine 4'-phosphoryl)serine" evidence="2">
    <location>
        <position position="3036"/>
    </location>
</feature>
<feature type="modified residue" description="O-(pantetheine 4'-phosphoryl)serine" evidence="2">
    <location>
        <position position="4583"/>
    </location>
</feature>